<keyword id="KW-0004">4Fe-4S</keyword>
<keyword id="KW-0963">Cytoplasm</keyword>
<keyword id="KW-0408">Iron</keyword>
<keyword id="KW-0411">Iron-sulfur</keyword>
<keyword id="KW-0479">Metal-binding</keyword>
<keyword id="KW-1185">Reference proteome</keyword>
<keyword id="KW-0949">S-adenosyl-L-methionine</keyword>
<keyword id="KW-0808">Transferase</keyword>
<sequence>MSQKTPSPPGELKRDIRALKGASKVARIPVKVEPTTERQRKPHWIRAKAPIGPEVLRLKGLLREHRLHTVCEEASCPNLGECFGHGTATFLIMGNICTRRCPFCDVAHGRPDPLDAEEPMHLAQAIGAMGLRHVVVTSVDRDDLRDGGAAHFTHCIQAIRTQSPQTRIEVLVPDFRGRMDRALEALTAGPPDIFNHNLETVPRLYKAVRPGADYLWSLRLLARFKEDHPTVPTKSGLMLGLGEELAEVEQVMKDLRDHGCDMLTLGQYLQPSLYHLPVRRFVTPEEFDGLGDKAREMGFTHVASGPMVRSSYHADRQAAGESVV</sequence>
<feature type="chain" id="PRO_1000012246" description="Lipoyl synthase">
    <location>
        <begin position="1"/>
        <end position="324"/>
    </location>
</feature>
<feature type="domain" description="Radical SAM core" evidence="2">
    <location>
        <begin position="83"/>
        <end position="300"/>
    </location>
</feature>
<feature type="binding site" evidence="1">
    <location>
        <position position="71"/>
    </location>
    <ligand>
        <name>[4Fe-4S] cluster</name>
        <dbReference type="ChEBI" id="CHEBI:49883"/>
        <label>1</label>
    </ligand>
</feature>
<feature type="binding site" evidence="1">
    <location>
        <position position="76"/>
    </location>
    <ligand>
        <name>[4Fe-4S] cluster</name>
        <dbReference type="ChEBI" id="CHEBI:49883"/>
        <label>1</label>
    </ligand>
</feature>
<feature type="binding site" evidence="1">
    <location>
        <position position="82"/>
    </location>
    <ligand>
        <name>[4Fe-4S] cluster</name>
        <dbReference type="ChEBI" id="CHEBI:49883"/>
        <label>1</label>
    </ligand>
</feature>
<feature type="binding site" evidence="1">
    <location>
        <position position="97"/>
    </location>
    <ligand>
        <name>[4Fe-4S] cluster</name>
        <dbReference type="ChEBI" id="CHEBI:49883"/>
        <label>2</label>
        <note>4Fe-4S-S-AdoMet</note>
    </ligand>
</feature>
<feature type="binding site" evidence="1">
    <location>
        <position position="101"/>
    </location>
    <ligand>
        <name>[4Fe-4S] cluster</name>
        <dbReference type="ChEBI" id="CHEBI:49883"/>
        <label>2</label>
        <note>4Fe-4S-S-AdoMet</note>
    </ligand>
</feature>
<feature type="binding site" evidence="1">
    <location>
        <position position="104"/>
    </location>
    <ligand>
        <name>[4Fe-4S] cluster</name>
        <dbReference type="ChEBI" id="CHEBI:49883"/>
        <label>2</label>
        <note>4Fe-4S-S-AdoMet</note>
    </ligand>
</feature>
<feature type="binding site" evidence="1">
    <location>
        <position position="311"/>
    </location>
    <ligand>
        <name>[4Fe-4S] cluster</name>
        <dbReference type="ChEBI" id="CHEBI:49883"/>
        <label>1</label>
    </ligand>
</feature>
<proteinExistence type="inferred from homology"/>
<reference key="1">
    <citation type="journal article" date="2006" name="Appl. Environ. Microbiol.">
        <title>Complete genome sequence of the marine, chemolithoautotrophic, ammonia-oxidizing bacterium Nitrosococcus oceani ATCC 19707.</title>
        <authorList>
            <person name="Klotz M.G."/>
            <person name="Arp D.J."/>
            <person name="Chain P.S.G."/>
            <person name="El-Sheikh A.F."/>
            <person name="Hauser L.J."/>
            <person name="Hommes N.G."/>
            <person name="Larimer F.W."/>
            <person name="Malfatti S.A."/>
            <person name="Norton J.M."/>
            <person name="Poret-Peterson A.T."/>
            <person name="Vergez L.M."/>
            <person name="Ward B.B."/>
        </authorList>
    </citation>
    <scope>NUCLEOTIDE SEQUENCE [LARGE SCALE GENOMIC DNA]</scope>
    <source>
        <strain>ATCC 19707 / BCRC 17464 / JCM 30415 / NCIMB 11848 / C-107</strain>
    </source>
</reference>
<protein>
    <recommendedName>
        <fullName evidence="1">Lipoyl synthase</fullName>
        <ecNumber evidence="1">2.8.1.8</ecNumber>
    </recommendedName>
    <alternativeName>
        <fullName evidence="1">Lip-syn</fullName>
        <shortName evidence="1">LS</shortName>
    </alternativeName>
    <alternativeName>
        <fullName evidence="1">Lipoate synthase</fullName>
    </alternativeName>
    <alternativeName>
        <fullName evidence="1">Lipoic acid synthase</fullName>
    </alternativeName>
    <alternativeName>
        <fullName evidence="1">Sulfur insertion protein LipA</fullName>
    </alternativeName>
</protein>
<accession>Q3J7W4</accession>
<name>LIPA_NITOC</name>
<comment type="function">
    <text evidence="1">Catalyzes the radical-mediated insertion of two sulfur atoms into the C-6 and C-8 positions of the octanoyl moiety bound to the lipoyl domains of lipoate-dependent enzymes, thereby converting the octanoylated domains into lipoylated derivatives.</text>
</comment>
<comment type="catalytic activity">
    <reaction evidence="1">
        <text>[[Fe-S] cluster scaffold protein carrying a second [4Fe-4S](2+) cluster] + N(6)-octanoyl-L-lysyl-[protein] + 2 oxidized [2Fe-2S]-[ferredoxin] + 2 S-adenosyl-L-methionine + 4 H(+) = [[Fe-S] cluster scaffold protein] + N(6)-[(R)-dihydrolipoyl]-L-lysyl-[protein] + 4 Fe(3+) + 2 hydrogen sulfide + 2 5'-deoxyadenosine + 2 L-methionine + 2 reduced [2Fe-2S]-[ferredoxin]</text>
        <dbReference type="Rhea" id="RHEA:16585"/>
        <dbReference type="Rhea" id="RHEA-COMP:9928"/>
        <dbReference type="Rhea" id="RHEA-COMP:10000"/>
        <dbReference type="Rhea" id="RHEA-COMP:10001"/>
        <dbReference type="Rhea" id="RHEA-COMP:10475"/>
        <dbReference type="Rhea" id="RHEA-COMP:14568"/>
        <dbReference type="Rhea" id="RHEA-COMP:14569"/>
        <dbReference type="ChEBI" id="CHEBI:15378"/>
        <dbReference type="ChEBI" id="CHEBI:17319"/>
        <dbReference type="ChEBI" id="CHEBI:29034"/>
        <dbReference type="ChEBI" id="CHEBI:29919"/>
        <dbReference type="ChEBI" id="CHEBI:33722"/>
        <dbReference type="ChEBI" id="CHEBI:33737"/>
        <dbReference type="ChEBI" id="CHEBI:33738"/>
        <dbReference type="ChEBI" id="CHEBI:57844"/>
        <dbReference type="ChEBI" id="CHEBI:59789"/>
        <dbReference type="ChEBI" id="CHEBI:78809"/>
        <dbReference type="ChEBI" id="CHEBI:83100"/>
        <dbReference type="EC" id="2.8.1.8"/>
    </reaction>
</comment>
<comment type="cofactor">
    <cofactor evidence="1">
        <name>[4Fe-4S] cluster</name>
        <dbReference type="ChEBI" id="CHEBI:49883"/>
    </cofactor>
    <text evidence="1">Binds 2 [4Fe-4S] clusters per subunit. One cluster is coordinated with 3 cysteines and an exchangeable S-adenosyl-L-methionine.</text>
</comment>
<comment type="pathway">
    <text evidence="1">Protein modification; protein lipoylation via endogenous pathway; protein N(6)-(lipoyl)lysine from octanoyl-[acyl-carrier-protein]: step 2/2.</text>
</comment>
<comment type="subcellular location">
    <subcellularLocation>
        <location evidence="1">Cytoplasm</location>
    </subcellularLocation>
</comment>
<comment type="similarity">
    <text evidence="1">Belongs to the radical SAM superfamily. Lipoyl synthase family.</text>
</comment>
<evidence type="ECO:0000255" key="1">
    <source>
        <dbReference type="HAMAP-Rule" id="MF_00206"/>
    </source>
</evidence>
<evidence type="ECO:0000255" key="2">
    <source>
        <dbReference type="PROSITE-ProRule" id="PRU01266"/>
    </source>
</evidence>
<dbReference type="EC" id="2.8.1.8" evidence="1"/>
<dbReference type="EMBL" id="CP000127">
    <property type="protein sequence ID" value="ABA59082.1"/>
    <property type="molecule type" value="Genomic_DNA"/>
</dbReference>
<dbReference type="RefSeq" id="WP_002812480.1">
    <property type="nucleotide sequence ID" value="NC_007484.1"/>
</dbReference>
<dbReference type="SMR" id="Q3J7W4"/>
<dbReference type="FunCoup" id="Q3J7W4">
    <property type="interactions" value="577"/>
</dbReference>
<dbReference type="STRING" id="323261.Noc_2629"/>
<dbReference type="KEGG" id="noc:Noc_2629"/>
<dbReference type="eggNOG" id="COG0320">
    <property type="taxonomic scope" value="Bacteria"/>
</dbReference>
<dbReference type="HOGENOM" id="CLU_033144_2_1_6"/>
<dbReference type="InParanoid" id="Q3J7W4"/>
<dbReference type="UniPathway" id="UPA00538">
    <property type="reaction ID" value="UER00593"/>
</dbReference>
<dbReference type="Proteomes" id="UP000006838">
    <property type="component" value="Chromosome"/>
</dbReference>
<dbReference type="GO" id="GO:0005737">
    <property type="term" value="C:cytoplasm"/>
    <property type="evidence" value="ECO:0007669"/>
    <property type="project" value="UniProtKB-SubCell"/>
</dbReference>
<dbReference type="GO" id="GO:0051539">
    <property type="term" value="F:4 iron, 4 sulfur cluster binding"/>
    <property type="evidence" value="ECO:0007669"/>
    <property type="project" value="UniProtKB-UniRule"/>
</dbReference>
<dbReference type="GO" id="GO:0016992">
    <property type="term" value="F:lipoate synthase activity"/>
    <property type="evidence" value="ECO:0007669"/>
    <property type="project" value="UniProtKB-UniRule"/>
</dbReference>
<dbReference type="GO" id="GO:0046872">
    <property type="term" value="F:metal ion binding"/>
    <property type="evidence" value="ECO:0007669"/>
    <property type="project" value="UniProtKB-KW"/>
</dbReference>
<dbReference type="FunFam" id="3.20.20.70:FF:000040">
    <property type="entry name" value="Lipoyl synthase"/>
    <property type="match status" value="1"/>
</dbReference>
<dbReference type="Gene3D" id="3.20.20.70">
    <property type="entry name" value="Aldolase class I"/>
    <property type="match status" value="1"/>
</dbReference>
<dbReference type="HAMAP" id="MF_00206">
    <property type="entry name" value="Lipoyl_synth"/>
    <property type="match status" value="1"/>
</dbReference>
<dbReference type="InterPro" id="IPR013785">
    <property type="entry name" value="Aldolase_TIM"/>
</dbReference>
<dbReference type="InterPro" id="IPR006638">
    <property type="entry name" value="Elp3/MiaA/NifB-like_rSAM"/>
</dbReference>
<dbReference type="InterPro" id="IPR031691">
    <property type="entry name" value="LIAS_N"/>
</dbReference>
<dbReference type="InterPro" id="IPR003698">
    <property type="entry name" value="Lipoyl_synth"/>
</dbReference>
<dbReference type="InterPro" id="IPR007197">
    <property type="entry name" value="rSAM"/>
</dbReference>
<dbReference type="NCBIfam" id="TIGR00510">
    <property type="entry name" value="lipA"/>
    <property type="match status" value="1"/>
</dbReference>
<dbReference type="NCBIfam" id="NF004019">
    <property type="entry name" value="PRK05481.1"/>
    <property type="match status" value="1"/>
</dbReference>
<dbReference type="NCBIfam" id="NF009544">
    <property type="entry name" value="PRK12928.1"/>
    <property type="match status" value="1"/>
</dbReference>
<dbReference type="PANTHER" id="PTHR10949">
    <property type="entry name" value="LIPOYL SYNTHASE"/>
    <property type="match status" value="1"/>
</dbReference>
<dbReference type="PANTHER" id="PTHR10949:SF0">
    <property type="entry name" value="LIPOYL SYNTHASE, MITOCHONDRIAL"/>
    <property type="match status" value="1"/>
</dbReference>
<dbReference type="Pfam" id="PF16881">
    <property type="entry name" value="LIAS_N"/>
    <property type="match status" value="1"/>
</dbReference>
<dbReference type="Pfam" id="PF04055">
    <property type="entry name" value="Radical_SAM"/>
    <property type="match status" value="1"/>
</dbReference>
<dbReference type="PIRSF" id="PIRSF005963">
    <property type="entry name" value="Lipoyl_synth"/>
    <property type="match status" value="1"/>
</dbReference>
<dbReference type="SFLD" id="SFLDF00271">
    <property type="entry name" value="lipoyl_synthase"/>
    <property type="match status" value="1"/>
</dbReference>
<dbReference type="SFLD" id="SFLDG01058">
    <property type="entry name" value="lipoyl_synthase_like"/>
    <property type="match status" value="1"/>
</dbReference>
<dbReference type="SMART" id="SM00729">
    <property type="entry name" value="Elp3"/>
    <property type="match status" value="1"/>
</dbReference>
<dbReference type="SUPFAM" id="SSF102114">
    <property type="entry name" value="Radical SAM enzymes"/>
    <property type="match status" value="1"/>
</dbReference>
<dbReference type="PROSITE" id="PS51918">
    <property type="entry name" value="RADICAL_SAM"/>
    <property type="match status" value="1"/>
</dbReference>
<organism>
    <name type="scientific">Nitrosococcus oceani (strain ATCC 19707 / BCRC 17464 / JCM 30415 / NCIMB 11848 / C-107)</name>
    <dbReference type="NCBI Taxonomy" id="323261"/>
    <lineage>
        <taxon>Bacteria</taxon>
        <taxon>Pseudomonadati</taxon>
        <taxon>Pseudomonadota</taxon>
        <taxon>Gammaproteobacteria</taxon>
        <taxon>Chromatiales</taxon>
        <taxon>Chromatiaceae</taxon>
        <taxon>Nitrosococcus</taxon>
    </lineage>
</organism>
<gene>
    <name evidence="1" type="primary">lipA</name>
    <name type="ordered locus">Noc_2629</name>
</gene>